<organism>
    <name type="scientific">Salmonella agona (strain SL483)</name>
    <dbReference type="NCBI Taxonomy" id="454166"/>
    <lineage>
        <taxon>Bacteria</taxon>
        <taxon>Pseudomonadati</taxon>
        <taxon>Pseudomonadota</taxon>
        <taxon>Gammaproteobacteria</taxon>
        <taxon>Enterobacterales</taxon>
        <taxon>Enterobacteriaceae</taxon>
        <taxon>Salmonella</taxon>
    </lineage>
</organism>
<feature type="chain" id="PRO_1000089109" description="Argininosuccinate lyase">
    <location>
        <begin position="1"/>
        <end position="458"/>
    </location>
</feature>
<proteinExistence type="inferred from homology"/>
<comment type="catalytic activity">
    <reaction evidence="1">
        <text>2-(N(omega)-L-arginino)succinate = fumarate + L-arginine</text>
        <dbReference type="Rhea" id="RHEA:24020"/>
        <dbReference type="ChEBI" id="CHEBI:29806"/>
        <dbReference type="ChEBI" id="CHEBI:32682"/>
        <dbReference type="ChEBI" id="CHEBI:57472"/>
        <dbReference type="EC" id="4.3.2.1"/>
    </reaction>
</comment>
<comment type="pathway">
    <text evidence="1">Amino-acid biosynthesis; L-arginine biosynthesis; L-arginine from L-ornithine and carbamoyl phosphate: step 3/3.</text>
</comment>
<comment type="subcellular location">
    <subcellularLocation>
        <location evidence="1">Cytoplasm</location>
    </subcellularLocation>
</comment>
<comment type="similarity">
    <text evidence="1">Belongs to the lyase 1 family. Argininosuccinate lyase subfamily.</text>
</comment>
<dbReference type="EC" id="4.3.2.1" evidence="1"/>
<dbReference type="EMBL" id="CP001138">
    <property type="protein sequence ID" value="ACH48756.1"/>
    <property type="molecule type" value="Genomic_DNA"/>
</dbReference>
<dbReference type="RefSeq" id="WP_001230059.1">
    <property type="nucleotide sequence ID" value="NC_011149.1"/>
</dbReference>
<dbReference type="SMR" id="B5F0U9"/>
<dbReference type="KEGG" id="sea:SeAg_B4364"/>
<dbReference type="HOGENOM" id="CLU_027272_2_3_6"/>
<dbReference type="UniPathway" id="UPA00068">
    <property type="reaction ID" value="UER00114"/>
</dbReference>
<dbReference type="Proteomes" id="UP000008819">
    <property type="component" value="Chromosome"/>
</dbReference>
<dbReference type="GO" id="GO:0005829">
    <property type="term" value="C:cytosol"/>
    <property type="evidence" value="ECO:0007669"/>
    <property type="project" value="TreeGrafter"/>
</dbReference>
<dbReference type="GO" id="GO:0004056">
    <property type="term" value="F:argininosuccinate lyase activity"/>
    <property type="evidence" value="ECO:0007669"/>
    <property type="project" value="UniProtKB-UniRule"/>
</dbReference>
<dbReference type="GO" id="GO:0042450">
    <property type="term" value="P:arginine biosynthetic process via ornithine"/>
    <property type="evidence" value="ECO:0007669"/>
    <property type="project" value="InterPro"/>
</dbReference>
<dbReference type="GO" id="GO:0006526">
    <property type="term" value="P:L-arginine biosynthetic process"/>
    <property type="evidence" value="ECO:0007669"/>
    <property type="project" value="UniProtKB-UniRule"/>
</dbReference>
<dbReference type="CDD" id="cd01359">
    <property type="entry name" value="Argininosuccinate_lyase"/>
    <property type="match status" value="1"/>
</dbReference>
<dbReference type="FunFam" id="1.10.275.10:FF:000004">
    <property type="entry name" value="Argininosuccinate lyase"/>
    <property type="match status" value="1"/>
</dbReference>
<dbReference type="FunFam" id="1.10.40.30:FF:000001">
    <property type="entry name" value="Argininosuccinate lyase"/>
    <property type="match status" value="1"/>
</dbReference>
<dbReference type="FunFam" id="1.20.200.10:FF:000006">
    <property type="entry name" value="Argininosuccinate lyase"/>
    <property type="match status" value="1"/>
</dbReference>
<dbReference type="Gene3D" id="1.10.40.30">
    <property type="entry name" value="Fumarase/aspartase (C-terminal domain)"/>
    <property type="match status" value="1"/>
</dbReference>
<dbReference type="Gene3D" id="1.20.200.10">
    <property type="entry name" value="Fumarase/aspartase (Central domain)"/>
    <property type="match status" value="1"/>
</dbReference>
<dbReference type="Gene3D" id="1.10.275.10">
    <property type="entry name" value="Fumarase/aspartase (N-terminal domain)"/>
    <property type="match status" value="1"/>
</dbReference>
<dbReference type="HAMAP" id="MF_00006">
    <property type="entry name" value="Arg_succ_lyase"/>
    <property type="match status" value="1"/>
</dbReference>
<dbReference type="InterPro" id="IPR029419">
    <property type="entry name" value="Arg_succ_lyase_C"/>
</dbReference>
<dbReference type="InterPro" id="IPR009049">
    <property type="entry name" value="Argininosuccinate_lyase"/>
</dbReference>
<dbReference type="InterPro" id="IPR024083">
    <property type="entry name" value="Fumarase/histidase_N"/>
</dbReference>
<dbReference type="InterPro" id="IPR020557">
    <property type="entry name" value="Fumarate_lyase_CS"/>
</dbReference>
<dbReference type="InterPro" id="IPR000362">
    <property type="entry name" value="Fumarate_lyase_fam"/>
</dbReference>
<dbReference type="InterPro" id="IPR022761">
    <property type="entry name" value="Fumarate_lyase_N"/>
</dbReference>
<dbReference type="InterPro" id="IPR008948">
    <property type="entry name" value="L-Aspartase-like"/>
</dbReference>
<dbReference type="NCBIfam" id="TIGR00838">
    <property type="entry name" value="argH"/>
    <property type="match status" value="1"/>
</dbReference>
<dbReference type="NCBIfam" id="NF008964">
    <property type="entry name" value="PRK12308.1"/>
    <property type="match status" value="1"/>
</dbReference>
<dbReference type="PANTHER" id="PTHR43814">
    <property type="entry name" value="ARGININOSUCCINATE LYASE"/>
    <property type="match status" value="1"/>
</dbReference>
<dbReference type="PANTHER" id="PTHR43814:SF1">
    <property type="entry name" value="ARGININOSUCCINATE LYASE"/>
    <property type="match status" value="1"/>
</dbReference>
<dbReference type="Pfam" id="PF14698">
    <property type="entry name" value="ASL_C2"/>
    <property type="match status" value="1"/>
</dbReference>
<dbReference type="Pfam" id="PF00206">
    <property type="entry name" value="Lyase_1"/>
    <property type="match status" value="1"/>
</dbReference>
<dbReference type="PRINTS" id="PR00145">
    <property type="entry name" value="ARGSUCLYASE"/>
</dbReference>
<dbReference type="PRINTS" id="PR00149">
    <property type="entry name" value="FUMRATELYASE"/>
</dbReference>
<dbReference type="SUPFAM" id="SSF48557">
    <property type="entry name" value="L-aspartase-like"/>
    <property type="match status" value="1"/>
</dbReference>
<dbReference type="PROSITE" id="PS00163">
    <property type="entry name" value="FUMARATE_LYASES"/>
    <property type="match status" value="1"/>
</dbReference>
<keyword id="KW-0028">Amino-acid biosynthesis</keyword>
<keyword id="KW-0055">Arginine biosynthesis</keyword>
<keyword id="KW-0963">Cytoplasm</keyword>
<keyword id="KW-0456">Lyase</keyword>
<gene>
    <name evidence="1" type="primary">argH</name>
    <name type="ordered locus">SeAg_B4364</name>
</gene>
<evidence type="ECO:0000255" key="1">
    <source>
        <dbReference type="HAMAP-Rule" id="MF_00006"/>
    </source>
</evidence>
<name>ARLY_SALA4</name>
<accession>B5F0U9</accession>
<protein>
    <recommendedName>
        <fullName evidence="1">Argininosuccinate lyase</fullName>
        <shortName evidence="1">ASAL</shortName>
        <ecNumber evidence="1">4.3.2.1</ecNumber>
    </recommendedName>
    <alternativeName>
        <fullName evidence="1">Arginosuccinase</fullName>
    </alternativeName>
</protein>
<sequence length="458" mass="50510">MALWGGRFTQAADQRFKQFNDSLRFDYRLAEQDIVGSVAWSKALVTVGVLTADEQRQLEEALNVLLEEVRANPQQILQSDAEDIHSWVEGRLIDKVGQLGKKLHTGRSRNDQVATDLKLWCKETVRELLTANRQLQSALVETAQANQDAIMPGYTHLQRAQPVTFAHWCLAYVEMLARDESRLQDTLKRLDVSPLGCGALAGTAYEIDREQLAGWLGFASATRNSLDSVSDRDHVLELLSDAAIGMVHLSRFAEDLIFFNSGEAGFVELSDRVTSGSSLMPQKKNPDALELIRGKCGRVQGALTGMMMTLKGLPLAYNKDMQEDKEGLFDALDTWLDCLHMAALVLDGIQVKRPRCQDAAQQGYANATELADYLVAKGVPFREAHHIVGEAVVEAIRQGKPLEALPLADLQKFSRVIGDDVYPILSLQSCLDKRAAKGGVSPQQVAQAIDDAKARLAL</sequence>
<reference key="1">
    <citation type="journal article" date="2011" name="J. Bacteriol.">
        <title>Comparative genomics of 28 Salmonella enterica isolates: evidence for CRISPR-mediated adaptive sublineage evolution.</title>
        <authorList>
            <person name="Fricke W.F."/>
            <person name="Mammel M.K."/>
            <person name="McDermott P.F."/>
            <person name="Tartera C."/>
            <person name="White D.G."/>
            <person name="Leclerc J.E."/>
            <person name="Ravel J."/>
            <person name="Cebula T.A."/>
        </authorList>
    </citation>
    <scope>NUCLEOTIDE SEQUENCE [LARGE SCALE GENOMIC DNA]</scope>
    <source>
        <strain>SL483</strain>
    </source>
</reference>